<proteinExistence type="inferred from homology"/>
<accession>Q819X7</accession>
<organism>
    <name type="scientific">Bacillus cereus (strain ATCC 14579 / DSM 31 / CCUG 7414 / JCM 2152 / NBRC 15305 / NCIMB 9373 / NCTC 2599 / NRRL B-3711)</name>
    <dbReference type="NCBI Taxonomy" id="226900"/>
    <lineage>
        <taxon>Bacteria</taxon>
        <taxon>Bacillati</taxon>
        <taxon>Bacillota</taxon>
        <taxon>Bacilli</taxon>
        <taxon>Bacillales</taxon>
        <taxon>Bacillaceae</taxon>
        <taxon>Bacillus</taxon>
        <taxon>Bacillus cereus group</taxon>
    </lineage>
</organism>
<feature type="chain" id="PRO_0000160471" description="ATP-dependent protease ATPase subunit HslU">
    <location>
        <begin position="1"/>
        <end position="463"/>
    </location>
</feature>
<feature type="binding site" evidence="1">
    <location>
        <position position="19"/>
    </location>
    <ligand>
        <name>ATP</name>
        <dbReference type="ChEBI" id="CHEBI:30616"/>
    </ligand>
</feature>
<feature type="binding site" evidence="1">
    <location>
        <begin position="61"/>
        <end position="66"/>
    </location>
    <ligand>
        <name>ATP</name>
        <dbReference type="ChEBI" id="CHEBI:30616"/>
    </ligand>
</feature>
<feature type="binding site" evidence="1">
    <location>
        <position position="277"/>
    </location>
    <ligand>
        <name>ATP</name>
        <dbReference type="ChEBI" id="CHEBI:30616"/>
    </ligand>
</feature>
<feature type="binding site" evidence="1">
    <location>
        <position position="341"/>
    </location>
    <ligand>
        <name>ATP</name>
        <dbReference type="ChEBI" id="CHEBI:30616"/>
    </ligand>
</feature>
<feature type="binding site" evidence="1">
    <location>
        <position position="413"/>
    </location>
    <ligand>
        <name>ATP</name>
        <dbReference type="ChEBI" id="CHEBI:30616"/>
    </ligand>
</feature>
<name>HSLU_BACCR</name>
<sequence>MHLHFTPRQIVEKLDQYIIGQKDAKKAVAVALRNRYRRSKLAENLRDEIAPKNILMIGPTGVGKTEVARRMAKLVGAPFIKVEATKFTEVGYVGRDVESMVRDLVETSVRIVKEEMVVKVQDKAEEQANQRLVEILVPSPEKQSGFKNPLEMLFGGAQNSNQTSDTQEDVEIEKKRQDVERKLAAGLLEEEIVSIEVTEQQSSMFDMLQGTGMEQMGMNFQDALGSFMPKKTKKRKLSVKEARKLLSNEEAQRLIDMDEVTQEAVYRAEQLGIIFIDEIDKIAGKQSNSVDVSREGVQRDILPIVEGSNVATKYGSVKTDYILFVAAGAFHMSKPSDLIPELQGRFPIRVELTKLSTDDFVKILIEPDNALIKQYMALLATEGIEIEFSDEAIRKIAEIAYQVNQDTDNIGARRLHTIMEKLLEDLSFEASEITLEKITITPQYVEEKLATIAKNKDVSQFIL</sequence>
<keyword id="KW-0067">ATP-binding</keyword>
<keyword id="KW-0143">Chaperone</keyword>
<keyword id="KW-0963">Cytoplasm</keyword>
<keyword id="KW-0547">Nucleotide-binding</keyword>
<keyword id="KW-1185">Reference proteome</keyword>
<dbReference type="EMBL" id="AE016877">
    <property type="protein sequence ID" value="AAP10749.1"/>
    <property type="molecule type" value="Genomic_DNA"/>
</dbReference>
<dbReference type="RefSeq" id="NP_833548.1">
    <property type="nucleotide sequence ID" value="NC_004722.1"/>
</dbReference>
<dbReference type="RefSeq" id="WP_000550077.1">
    <property type="nucleotide sequence ID" value="NC_004722.1"/>
</dbReference>
<dbReference type="SMR" id="Q819X7"/>
<dbReference type="STRING" id="226900.BC_3827"/>
<dbReference type="KEGG" id="bce:BC3827"/>
<dbReference type="PATRIC" id="fig|226900.8.peg.3946"/>
<dbReference type="HOGENOM" id="CLU_033123_0_0_9"/>
<dbReference type="Proteomes" id="UP000001417">
    <property type="component" value="Chromosome"/>
</dbReference>
<dbReference type="GO" id="GO:0009376">
    <property type="term" value="C:HslUV protease complex"/>
    <property type="evidence" value="ECO:0000318"/>
    <property type="project" value="GO_Central"/>
</dbReference>
<dbReference type="GO" id="GO:0005524">
    <property type="term" value="F:ATP binding"/>
    <property type="evidence" value="ECO:0000318"/>
    <property type="project" value="GO_Central"/>
</dbReference>
<dbReference type="GO" id="GO:0016887">
    <property type="term" value="F:ATP hydrolysis activity"/>
    <property type="evidence" value="ECO:0000318"/>
    <property type="project" value="GO_Central"/>
</dbReference>
<dbReference type="GO" id="GO:0008233">
    <property type="term" value="F:peptidase activity"/>
    <property type="evidence" value="ECO:0007669"/>
    <property type="project" value="InterPro"/>
</dbReference>
<dbReference type="GO" id="GO:0036402">
    <property type="term" value="F:proteasome-activating activity"/>
    <property type="evidence" value="ECO:0007669"/>
    <property type="project" value="UniProtKB-UniRule"/>
</dbReference>
<dbReference type="GO" id="GO:0043335">
    <property type="term" value="P:protein unfolding"/>
    <property type="evidence" value="ECO:0007669"/>
    <property type="project" value="UniProtKB-UniRule"/>
</dbReference>
<dbReference type="GO" id="GO:0051603">
    <property type="term" value="P:proteolysis involved in protein catabolic process"/>
    <property type="evidence" value="ECO:0000318"/>
    <property type="project" value="GO_Central"/>
</dbReference>
<dbReference type="CDD" id="cd19498">
    <property type="entry name" value="RecA-like_HslU"/>
    <property type="match status" value="1"/>
</dbReference>
<dbReference type="FunFam" id="3.40.50.300:FF:000220">
    <property type="entry name" value="ATP-dependent protease ATPase subunit HslU"/>
    <property type="match status" value="1"/>
</dbReference>
<dbReference type="Gene3D" id="1.10.8.60">
    <property type="match status" value="1"/>
</dbReference>
<dbReference type="Gene3D" id="3.40.50.300">
    <property type="entry name" value="P-loop containing nucleotide triphosphate hydrolases"/>
    <property type="match status" value="2"/>
</dbReference>
<dbReference type="HAMAP" id="MF_00249">
    <property type="entry name" value="HslU"/>
    <property type="match status" value="1"/>
</dbReference>
<dbReference type="InterPro" id="IPR003593">
    <property type="entry name" value="AAA+_ATPase"/>
</dbReference>
<dbReference type="InterPro" id="IPR050052">
    <property type="entry name" value="ATP-dep_Clp_protease_ClpX"/>
</dbReference>
<dbReference type="InterPro" id="IPR003959">
    <property type="entry name" value="ATPase_AAA_core"/>
</dbReference>
<dbReference type="InterPro" id="IPR019489">
    <property type="entry name" value="Clp_ATPase_C"/>
</dbReference>
<dbReference type="InterPro" id="IPR004491">
    <property type="entry name" value="HslU"/>
</dbReference>
<dbReference type="InterPro" id="IPR027417">
    <property type="entry name" value="P-loop_NTPase"/>
</dbReference>
<dbReference type="NCBIfam" id="TIGR00390">
    <property type="entry name" value="hslU"/>
    <property type="match status" value="1"/>
</dbReference>
<dbReference type="NCBIfam" id="NF003544">
    <property type="entry name" value="PRK05201.1"/>
    <property type="match status" value="1"/>
</dbReference>
<dbReference type="PANTHER" id="PTHR48102">
    <property type="entry name" value="ATP-DEPENDENT CLP PROTEASE ATP-BINDING SUBUNIT CLPX-LIKE, MITOCHONDRIAL-RELATED"/>
    <property type="match status" value="1"/>
</dbReference>
<dbReference type="PANTHER" id="PTHR48102:SF3">
    <property type="entry name" value="ATP-DEPENDENT PROTEASE ATPASE SUBUNIT HSLU"/>
    <property type="match status" value="1"/>
</dbReference>
<dbReference type="Pfam" id="PF00004">
    <property type="entry name" value="AAA"/>
    <property type="match status" value="1"/>
</dbReference>
<dbReference type="Pfam" id="PF07724">
    <property type="entry name" value="AAA_2"/>
    <property type="match status" value="1"/>
</dbReference>
<dbReference type="Pfam" id="PF10431">
    <property type="entry name" value="ClpB_D2-small"/>
    <property type="match status" value="1"/>
</dbReference>
<dbReference type="SMART" id="SM00382">
    <property type="entry name" value="AAA"/>
    <property type="match status" value="1"/>
</dbReference>
<dbReference type="SMART" id="SM01086">
    <property type="entry name" value="ClpB_D2-small"/>
    <property type="match status" value="1"/>
</dbReference>
<dbReference type="SUPFAM" id="SSF52540">
    <property type="entry name" value="P-loop containing nucleoside triphosphate hydrolases"/>
    <property type="match status" value="1"/>
</dbReference>
<gene>
    <name evidence="1" type="primary">hslU</name>
    <name type="ordered locus">BC_3827</name>
</gene>
<protein>
    <recommendedName>
        <fullName evidence="1">ATP-dependent protease ATPase subunit HslU</fullName>
    </recommendedName>
    <alternativeName>
        <fullName evidence="1">Unfoldase HslU</fullName>
    </alternativeName>
</protein>
<comment type="function">
    <text evidence="1">ATPase subunit of a proteasome-like degradation complex; this subunit has chaperone activity. The binding of ATP and its subsequent hydrolysis by HslU are essential for unfolding of protein substrates subsequently hydrolyzed by HslV. HslU recognizes the N-terminal part of its protein substrates and unfolds these before they are guided to HslV for hydrolysis.</text>
</comment>
<comment type="subunit">
    <text evidence="1">A double ring-shaped homohexamer of HslV is capped on each side by a ring-shaped HslU homohexamer. The assembly of the HslU/HslV complex is dependent on binding of ATP.</text>
</comment>
<comment type="subcellular location">
    <subcellularLocation>
        <location evidence="1">Cytoplasm</location>
    </subcellularLocation>
</comment>
<comment type="similarity">
    <text evidence="1">Belongs to the ClpX chaperone family. HslU subfamily.</text>
</comment>
<reference key="1">
    <citation type="journal article" date="2003" name="Nature">
        <title>Genome sequence of Bacillus cereus and comparative analysis with Bacillus anthracis.</title>
        <authorList>
            <person name="Ivanova N."/>
            <person name="Sorokin A."/>
            <person name="Anderson I."/>
            <person name="Galleron N."/>
            <person name="Candelon B."/>
            <person name="Kapatral V."/>
            <person name="Bhattacharyya A."/>
            <person name="Reznik G."/>
            <person name="Mikhailova N."/>
            <person name="Lapidus A."/>
            <person name="Chu L."/>
            <person name="Mazur M."/>
            <person name="Goltsman E."/>
            <person name="Larsen N."/>
            <person name="D'Souza M."/>
            <person name="Walunas T."/>
            <person name="Grechkin Y."/>
            <person name="Pusch G."/>
            <person name="Haselkorn R."/>
            <person name="Fonstein M."/>
            <person name="Ehrlich S.D."/>
            <person name="Overbeek R."/>
            <person name="Kyrpides N.C."/>
        </authorList>
    </citation>
    <scope>NUCLEOTIDE SEQUENCE [LARGE SCALE GENOMIC DNA]</scope>
    <source>
        <strain>ATCC 14579 / DSM 31 / CCUG 7414 / JCM 2152 / NBRC 15305 / NCIMB 9373 / NCTC 2599 / NRRL B-3711</strain>
    </source>
</reference>
<evidence type="ECO:0000255" key="1">
    <source>
        <dbReference type="HAMAP-Rule" id="MF_00249"/>
    </source>
</evidence>